<evidence type="ECO:0000250" key="1"/>
<evidence type="ECO:0000255" key="2"/>
<evidence type="ECO:0000305" key="3"/>
<organism>
    <name type="scientific">Staphylococcus aureus (strain N315)</name>
    <dbReference type="NCBI Taxonomy" id="158879"/>
    <lineage>
        <taxon>Bacteria</taxon>
        <taxon>Bacillati</taxon>
        <taxon>Bacillota</taxon>
        <taxon>Bacilli</taxon>
        <taxon>Bacillales</taxon>
        <taxon>Staphylococcaceae</taxon>
        <taxon>Staphylococcus</taxon>
    </lineage>
</organism>
<reference key="1">
    <citation type="journal article" date="2001" name="Lancet">
        <title>Whole genome sequencing of meticillin-resistant Staphylococcus aureus.</title>
        <authorList>
            <person name="Kuroda M."/>
            <person name="Ohta T."/>
            <person name="Uchiyama I."/>
            <person name="Baba T."/>
            <person name="Yuzawa H."/>
            <person name="Kobayashi I."/>
            <person name="Cui L."/>
            <person name="Oguchi A."/>
            <person name="Aoki K."/>
            <person name="Nagai Y."/>
            <person name="Lian J.-Q."/>
            <person name="Ito T."/>
            <person name="Kanamori M."/>
            <person name="Matsumaru H."/>
            <person name="Maruyama A."/>
            <person name="Murakami H."/>
            <person name="Hosoyama A."/>
            <person name="Mizutani-Ui Y."/>
            <person name="Takahashi N.K."/>
            <person name="Sawano T."/>
            <person name="Inoue R."/>
            <person name="Kaito C."/>
            <person name="Sekimizu K."/>
            <person name="Hirakawa H."/>
            <person name="Kuhara S."/>
            <person name="Goto S."/>
            <person name="Yabuzaki J."/>
            <person name="Kanehisa M."/>
            <person name="Yamashita A."/>
            <person name="Oshima K."/>
            <person name="Furuya K."/>
            <person name="Yoshino C."/>
            <person name="Shiba T."/>
            <person name="Hattori M."/>
            <person name="Ogasawara N."/>
            <person name="Hayashi H."/>
            <person name="Hiramatsu K."/>
        </authorList>
    </citation>
    <scope>NUCLEOTIDE SEQUENCE [LARGE SCALE GENOMIC DNA]</scope>
    <source>
        <strain>N315</strain>
    </source>
</reference>
<accession>P60944</accession>
<accession>Q99S15</accession>
<protein>
    <recommendedName>
        <fullName>Probable glucose uptake protein GlcU</fullName>
    </recommendedName>
</protein>
<sequence length="287" mass="30393">MQFLDFLIALLPALFWGSVVLINVFVGGGPYNQIRGTTLGALIVGLGLLITGFAKFNNPTVIIVGLISGALWAFGQANQLKSISLIGVSNTMPVSTGMQLVGTTLFSVIFLGEWSSMTQIIFGLIAMILLVTGVALTSLKAKNERQSDNPEFKKAMGILIVSTVGYVGFVVLGDIFGVGGTDALFFQSVGMAIGGFILSMNHKTSLKSTALNLLPGVIWGIGNLFMFYSQPKVGVATSFSLSQLLVIVSTLGGIFILGERKDRRQMTGIWAGIIIIVIAAIILGNLK</sequence>
<dbReference type="EMBL" id="BA000018">
    <property type="protein sequence ID" value="BAB43348.1"/>
    <property type="molecule type" value="Genomic_DNA"/>
</dbReference>
<dbReference type="PIR" id="C90023">
    <property type="entry name" value="C90023"/>
</dbReference>
<dbReference type="RefSeq" id="WP_001159898.1">
    <property type="nucleotide sequence ID" value="NC_002745.2"/>
</dbReference>
<dbReference type="EnsemblBacteria" id="BAB43348">
    <property type="protein sequence ID" value="BAB43348"/>
    <property type="gene ID" value="BAB43348"/>
</dbReference>
<dbReference type="KEGG" id="sau:SA2053"/>
<dbReference type="HOGENOM" id="CLU_076024_0_0_9"/>
<dbReference type="GO" id="GO:0005886">
    <property type="term" value="C:plasma membrane"/>
    <property type="evidence" value="ECO:0007669"/>
    <property type="project" value="UniProtKB-SubCell"/>
</dbReference>
<dbReference type="GO" id="GO:0015144">
    <property type="term" value="F:carbohydrate transmembrane transporter activity"/>
    <property type="evidence" value="ECO:0007669"/>
    <property type="project" value="InterPro"/>
</dbReference>
<dbReference type="InterPro" id="IPR010651">
    <property type="entry name" value="Sugar_transport"/>
</dbReference>
<dbReference type="PANTHER" id="PTHR16119">
    <property type="entry name" value="TRANSMEMBRANE PROTEIN 144"/>
    <property type="match status" value="1"/>
</dbReference>
<dbReference type="PANTHER" id="PTHR16119:SF17">
    <property type="entry name" value="TRANSMEMBRANE PROTEIN 144"/>
    <property type="match status" value="1"/>
</dbReference>
<dbReference type="Pfam" id="PF06800">
    <property type="entry name" value="Sugar_transport"/>
    <property type="match status" value="1"/>
</dbReference>
<dbReference type="SUPFAM" id="SSF103481">
    <property type="entry name" value="Multidrug resistance efflux transporter EmrE"/>
    <property type="match status" value="2"/>
</dbReference>
<gene>
    <name type="primary">glcU</name>
    <name type="ordered locus">SA2053</name>
</gene>
<feature type="chain" id="PRO_0000213626" description="Probable glucose uptake protein GlcU">
    <location>
        <begin position="1"/>
        <end position="287"/>
    </location>
</feature>
<feature type="transmembrane region" description="Helical" evidence="2">
    <location>
        <begin position="7"/>
        <end position="29"/>
    </location>
</feature>
<feature type="transmembrane region" description="Helical" evidence="2">
    <location>
        <begin position="34"/>
        <end position="53"/>
    </location>
</feature>
<feature type="transmembrane region" description="Helical" evidence="2">
    <location>
        <begin position="60"/>
        <end position="77"/>
    </location>
</feature>
<feature type="transmembrane region" description="Helical" evidence="2">
    <location>
        <begin position="114"/>
        <end position="136"/>
    </location>
</feature>
<feature type="transmembrane region" description="Helical" evidence="2">
    <location>
        <begin position="157"/>
        <end position="179"/>
    </location>
</feature>
<feature type="transmembrane region" description="Helical" evidence="2">
    <location>
        <begin position="184"/>
        <end position="201"/>
    </location>
</feature>
<feature type="transmembrane region" description="Helical" evidence="2">
    <location>
        <begin position="208"/>
        <end position="230"/>
    </location>
</feature>
<feature type="transmembrane region" description="Helical" evidence="2">
    <location>
        <begin position="235"/>
        <end position="257"/>
    </location>
</feature>
<feature type="transmembrane region" description="Helical" evidence="2">
    <location>
        <begin position="269"/>
        <end position="286"/>
    </location>
</feature>
<comment type="function">
    <text evidence="1">Involved in the uptake of glucose.</text>
</comment>
<comment type="subcellular location">
    <subcellularLocation>
        <location evidence="3">Cell membrane</location>
        <topology evidence="3">Multi-pass membrane protein</topology>
    </subcellularLocation>
</comment>
<comment type="similarity">
    <text evidence="3">Belongs to the GRP transporter (TC 2.A.7.5) family.</text>
</comment>
<proteinExistence type="inferred from homology"/>
<name>GLCU_STAAN</name>
<keyword id="KW-1003">Cell membrane</keyword>
<keyword id="KW-0472">Membrane</keyword>
<keyword id="KW-0762">Sugar transport</keyword>
<keyword id="KW-0812">Transmembrane</keyword>
<keyword id="KW-1133">Transmembrane helix</keyword>
<keyword id="KW-0813">Transport</keyword>